<feature type="chain" id="PRO_0000196535" description="Fumarate reductase subunit C">
    <location>
        <begin position="1"/>
        <end position="131"/>
    </location>
</feature>
<feature type="transmembrane region" description="Helical" evidence="1">
    <location>
        <begin position="30"/>
        <end position="50"/>
    </location>
</feature>
<feature type="transmembrane region" description="Helical" evidence="1">
    <location>
        <begin position="57"/>
        <end position="77"/>
    </location>
</feature>
<feature type="transmembrane region" description="Helical" evidence="1">
    <location>
        <begin position="109"/>
        <end position="129"/>
    </location>
</feature>
<accession>P67639</accession>
<accession>Q8XGA6</accession>
<dbReference type="EMBL" id="AL513382">
    <property type="protein sequence ID" value="CAD06821.1"/>
    <property type="molecule type" value="Genomic_DNA"/>
</dbReference>
<dbReference type="EMBL" id="AE014613">
    <property type="protein sequence ID" value="AAO71844.1"/>
    <property type="molecule type" value="Genomic_DNA"/>
</dbReference>
<dbReference type="RefSeq" id="NP_458780.1">
    <property type="nucleotide sequence ID" value="NC_003198.1"/>
</dbReference>
<dbReference type="RefSeq" id="WP_000208749.1">
    <property type="nucleotide sequence ID" value="NZ_WSUR01000012.1"/>
</dbReference>
<dbReference type="SMR" id="P67639"/>
<dbReference type="STRING" id="220341.gene:17588519"/>
<dbReference type="KEGG" id="stt:t4393"/>
<dbReference type="KEGG" id="sty:STY4701"/>
<dbReference type="PATRIC" id="fig|220341.7.peg.4802"/>
<dbReference type="eggNOG" id="COG3029">
    <property type="taxonomic scope" value="Bacteria"/>
</dbReference>
<dbReference type="HOGENOM" id="CLU_156492_0_0_6"/>
<dbReference type="OMA" id="MTATWWQ"/>
<dbReference type="OrthoDB" id="8909678at2"/>
<dbReference type="Proteomes" id="UP000000541">
    <property type="component" value="Chromosome"/>
</dbReference>
<dbReference type="Proteomes" id="UP000002670">
    <property type="component" value="Chromosome"/>
</dbReference>
<dbReference type="GO" id="GO:0045283">
    <property type="term" value="C:fumarate reductase complex"/>
    <property type="evidence" value="ECO:0007669"/>
    <property type="project" value="UniProtKB-UniRule"/>
</dbReference>
<dbReference type="GO" id="GO:0005886">
    <property type="term" value="C:plasma membrane"/>
    <property type="evidence" value="ECO:0007669"/>
    <property type="project" value="UniProtKB-SubCell"/>
</dbReference>
<dbReference type="GO" id="GO:0000104">
    <property type="term" value="F:succinate dehydrogenase activity"/>
    <property type="evidence" value="ECO:0007669"/>
    <property type="project" value="UniProtKB-UniRule"/>
</dbReference>
<dbReference type="CDD" id="cd00546">
    <property type="entry name" value="QFR_TypeD_subunitC"/>
    <property type="match status" value="1"/>
</dbReference>
<dbReference type="Gene3D" id="1.20.1300.10">
    <property type="entry name" value="Fumarate reductase/succinate dehydrogenase, transmembrane subunit"/>
    <property type="match status" value="1"/>
</dbReference>
<dbReference type="HAMAP" id="MF_00708">
    <property type="entry name" value="Fumarate_red_C"/>
    <property type="match status" value="1"/>
</dbReference>
<dbReference type="InterPro" id="IPR003510">
    <property type="entry name" value="Fumarate_red_C"/>
</dbReference>
<dbReference type="InterPro" id="IPR034804">
    <property type="entry name" value="SQR/QFR_C/D"/>
</dbReference>
<dbReference type="NCBIfam" id="NF003445">
    <property type="entry name" value="PRK04987.1"/>
    <property type="match status" value="1"/>
</dbReference>
<dbReference type="Pfam" id="PF02300">
    <property type="entry name" value="Fumarate_red_C"/>
    <property type="match status" value="1"/>
</dbReference>
<dbReference type="PIRSF" id="PIRSF000180">
    <property type="entry name" value="FrdC"/>
    <property type="match status" value="1"/>
</dbReference>
<dbReference type="SUPFAM" id="SSF81343">
    <property type="entry name" value="Fumarate reductase respiratory complex transmembrane subunits"/>
    <property type="match status" value="1"/>
</dbReference>
<evidence type="ECO:0000255" key="1">
    <source>
        <dbReference type="HAMAP-Rule" id="MF_00708"/>
    </source>
</evidence>
<sequence>MTTKRKPYVRPMTSTWWKKLPFYRFYMLREGTAVPAVWFSIELIFGLFALKHGAESWMGFVGFLQNPVVVILNLITLAAALLHTKTWFELAPKAANIIVKDEKMGPEPIIKGLWVVTAVVTVVILYVALFW</sequence>
<gene>
    <name evidence="1" type="primary">frdC</name>
    <name type="ordered locus">STY4701</name>
    <name type="ordered locus">t4393</name>
</gene>
<organism>
    <name type="scientific">Salmonella typhi</name>
    <dbReference type="NCBI Taxonomy" id="90370"/>
    <lineage>
        <taxon>Bacteria</taxon>
        <taxon>Pseudomonadati</taxon>
        <taxon>Pseudomonadota</taxon>
        <taxon>Gammaproteobacteria</taxon>
        <taxon>Enterobacterales</taxon>
        <taxon>Enterobacteriaceae</taxon>
        <taxon>Salmonella</taxon>
    </lineage>
</organism>
<comment type="function">
    <text evidence="1">Two distinct, membrane-bound, FAD-containing enzymes are responsible for the catalysis of fumarate and succinate interconversion; fumarate reductase is used in anaerobic growth, and succinate dehydrogenase is used in aerobic growth. Anchors the catalytic components of the fumarate reductase complex to the cell inner membrane, binds quinones.</text>
</comment>
<comment type="subunit">
    <text evidence="1">Part of an enzyme complex containing four subunits: a flavoprotein (FrdA), an iron-sulfur protein (FrdB), and two hydrophobic anchor proteins (FrdC and FrdD).</text>
</comment>
<comment type="subcellular location">
    <subcellularLocation>
        <location evidence="1">Cell inner membrane</location>
        <topology evidence="1">Multi-pass membrane protein</topology>
    </subcellularLocation>
</comment>
<comment type="similarity">
    <text evidence="1">Belongs to the FrdC family.</text>
</comment>
<name>FRDC_SALTI</name>
<proteinExistence type="inferred from homology"/>
<reference key="1">
    <citation type="journal article" date="2001" name="Nature">
        <title>Complete genome sequence of a multiple drug resistant Salmonella enterica serovar Typhi CT18.</title>
        <authorList>
            <person name="Parkhill J."/>
            <person name="Dougan G."/>
            <person name="James K.D."/>
            <person name="Thomson N.R."/>
            <person name="Pickard D."/>
            <person name="Wain J."/>
            <person name="Churcher C.M."/>
            <person name="Mungall K.L."/>
            <person name="Bentley S.D."/>
            <person name="Holden M.T.G."/>
            <person name="Sebaihia M."/>
            <person name="Baker S."/>
            <person name="Basham D."/>
            <person name="Brooks K."/>
            <person name="Chillingworth T."/>
            <person name="Connerton P."/>
            <person name="Cronin A."/>
            <person name="Davis P."/>
            <person name="Davies R.M."/>
            <person name="Dowd L."/>
            <person name="White N."/>
            <person name="Farrar J."/>
            <person name="Feltwell T."/>
            <person name="Hamlin N."/>
            <person name="Haque A."/>
            <person name="Hien T.T."/>
            <person name="Holroyd S."/>
            <person name="Jagels K."/>
            <person name="Krogh A."/>
            <person name="Larsen T.S."/>
            <person name="Leather S."/>
            <person name="Moule S."/>
            <person name="O'Gaora P."/>
            <person name="Parry C."/>
            <person name="Quail M.A."/>
            <person name="Rutherford K.M."/>
            <person name="Simmonds M."/>
            <person name="Skelton J."/>
            <person name="Stevens K."/>
            <person name="Whitehead S."/>
            <person name="Barrell B.G."/>
        </authorList>
    </citation>
    <scope>NUCLEOTIDE SEQUENCE [LARGE SCALE GENOMIC DNA]</scope>
    <source>
        <strain>CT18</strain>
    </source>
</reference>
<reference key="2">
    <citation type="journal article" date="2003" name="J. Bacteriol.">
        <title>Comparative genomics of Salmonella enterica serovar Typhi strains Ty2 and CT18.</title>
        <authorList>
            <person name="Deng W."/>
            <person name="Liou S.-R."/>
            <person name="Plunkett G. III"/>
            <person name="Mayhew G.F."/>
            <person name="Rose D.J."/>
            <person name="Burland V."/>
            <person name="Kodoyianni V."/>
            <person name="Schwartz D.C."/>
            <person name="Blattner F.R."/>
        </authorList>
    </citation>
    <scope>NUCLEOTIDE SEQUENCE [LARGE SCALE GENOMIC DNA]</scope>
    <source>
        <strain>ATCC 700931 / Ty2</strain>
    </source>
</reference>
<keyword id="KW-0997">Cell inner membrane</keyword>
<keyword id="KW-1003">Cell membrane</keyword>
<keyword id="KW-0472">Membrane</keyword>
<keyword id="KW-0812">Transmembrane</keyword>
<keyword id="KW-1133">Transmembrane helix</keyword>
<protein>
    <recommendedName>
        <fullName evidence="1">Fumarate reductase subunit C</fullName>
    </recommendedName>
    <alternativeName>
        <fullName evidence="1">Fumarate reductase 15 kDa hydrophobic protein</fullName>
    </alternativeName>
    <alternativeName>
        <fullName evidence="1">Quinol-fumarate reductase subunit C</fullName>
        <shortName evidence="1">QFR subunit C</shortName>
    </alternativeName>
</protein>